<accession>P0DQS9</accession>
<protein>
    <recommendedName>
        <fullName evidence="3">Nemertide alpha-7</fullName>
    </recommendedName>
</protein>
<proteinExistence type="inferred from homology"/>
<sequence>GCIPVGSMCTISNGCCTKNCGWNFHCNKPNQ</sequence>
<organism>
    <name type="scientific">Lineus ruber</name>
    <name type="common">Red bootlace</name>
    <name type="synonym">Poseidon ruber</name>
    <dbReference type="NCBI Taxonomy" id="88926"/>
    <lineage>
        <taxon>Eukaryota</taxon>
        <taxon>Metazoa</taxon>
        <taxon>Spiralia</taxon>
        <taxon>Lophotrochozoa</taxon>
        <taxon>Nemertea</taxon>
        <taxon>Pilidiophora</taxon>
        <taxon>Heteronemertea</taxon>
        <taxon>Lineidae</taxon>
        <taxon>Lineus</taxon>
    </lineage>
</organism>
<comment type="function">
    <text evidence="1 2">Potent toxin, demonstrating strong inhibitory effects on insect sodium channels (Nav) and reduced activity on mammalian sodium channels (By similarity). Potently inhibits inactivation of insect sodium channels of B.germanica (BgNav1) (EC(50)=9.5 nM) (PubMed:34445875). The toxin also delays the inactivation of most mammalian Nav (human Nav1.1/SCN1A; EC(50)=171.5 nM, rat Nav1.2/SCN2A; EC(50)=50.4 nM, rat Nav1.3/SCN3A; EC(50)=170.2 nM, rat Nav1.4/SCN4A; EC(50)=810.6 nM, human Nav1.5/SCN5A; EC(50)=155.6 nM, mouse Nav1.6/SCN8A; EC(50)=147.6 nM, human Nav1.9/SCN9A; EC(50)=129 nM) (PubMed:34445875). Inactivation is completely prevented by a concentration of 1 uM, resulting in sustained, non-inactivating currents (By similarity). In addition, the toxin significantly enhances the recovery from inactivation, and the open state is not required for the toxin to interact with the channel (By similarity). In vivo, injection into brine shrimp (Artemia salina) stops movement or causes death after 24 hours (EC(50)=6.1 uM) (PubMed:34445875).</text>
</comment>
<comment type="subcellular location">
    <subcellularLocation>
        <location evidence="1">Secreted</location>
    </subcellularLocation>
</comment>
<comment type="tissue specificity">
    <text evidence="1">Confined to the epidermis and to the mucus layer.</text>
</comment>
<comment type="domain">
    <text evidence="1">The presence of a 'disulfide through disulfide knot' structurally defines this protein as a knottin.</text>
</comment>
<comment type="miscellaneous">
    <text evidence="2">Negative results: does not show effect on rat Nav1.8/SCN10A.</text>
</comment>
<comment type="similarity">
    <text evidence="4">Belongs to the nemertide family.</text>
</comment>
<evidence type="ECO:0000250" key="1">
    <source>
        <dbReference type="UniProtKB" id="P0DM24"/>
    </source>
</evidence>
<evidence type="ECO:0000269" key="2">
    <source>
    </source>
</evidence>
<evidence type="ECO:0000303" key="3">
    <source>
    </source>
</evidence>
<evidence type="ECO:0000305" key="4"/>
<evidence type="ECO:0000305" key="5">
    <source>
    </source>
</evidence>
<feature type="chain" id="PRO_0000454430" description="Nemertide alpha-7" evidence="5">
    <location>
        <begin position="1"/>
        <end position="31"/>
    </location>
</feature>
<feature type="modified residue" description="4-hydroxyproline" evidence="1">
    <location>
        <position position="29"/>
    </location>
</feature>
<feature type="disulfide bond" evidence="1">
    <location>
        <begin position="2"/>
        <end position="16"/>
    </location>
</feature>
<feature type="disulfide bond" evidence="1">
    <location>
        <begin position="9"/>
        <end position="20"/>
    </location>
</feature>
<feature type="disulfide bond" evidence="1">
    <location>
        <begin position="15"/>
        <end position="26"/>
    </location>
</feature>
<reference key="1">
    <citation type="journal article" date="2018" name="Sci. Rep.">
        <title>Peptide ion channel toxins from the bootlace worm, the longest animal on Earth.</title>
        <authorList>
            <person name="Jacobsson E."/>
            <person name="Andersson H.S."/>
            <person name="Strand M."/>
            <person name="Peigneur S."/>
            <person name="Eriksson C."/>
            <person name="Loden H."/>
            <person name="Shariatgorji M."/>
            <person name="Andren P.E."/>
            <person name="Lebbe E.K.M."/>
            <person name="Rosengren K.J."/>
            <person name="Tytgat J."/>
            <person name="Goeransson U."/>
        </authorList>
    </citation>
    <scope>NUCLEOTIDE SEQUENCE [MRNA]</scope>
</reference>
<reference key="2">
    <citation type="journal article" date="2021" name="J. Nat. Prod.">
        <title>Functional characterization of the nemertide alpha family of peptide toxins.</title>
        <authorList>
            <person name="Jacobsson E."/>
            <person name="Peigneur S."/>
            <person name="Andersson H.S."/>
            <person name="Laborde Q."/>
            <person name="Strand M."/>
            <person name="Tytgat J."/>
            <person name="Goeransson U."/>
        </authorList>
    </citation>
    <scope>NUCLEOTIDE SEQUENCE [MRNA]</scope>
    <scope>SYNTHESIS</scope>
    <scope>FUNCTION</scope>
    <scope>BIOASSAY</scope>
</reference>
<name>NEMA7_LINRU</name>
<keyword id="KW-1015">Disulfide bond</keyword>
<keyword id="KW-0379">Hydroxylation</keyword>
<keyword id="KW-0872">Ion channel impairing toxin</keyword>
<keyword id="KW-0960">Knottin</keyword>
<keyword id="KW-0528">Neurotoxin</keyword>
<keyword id="KW-0964">Secreted</keyword>
<keyword id="KW-0800">Toxin</keyword>
<keyword id="KW-0738">Voltage-gated sodium channel impairing toxin</keyword>
<dbReference type="SMR" id="P0DQS9"/>
<dbReference type="GO" id="GO:0005576">
    <property type="term" value="C:extracellular region"/>
    <property type="evidence" value="ECO:0007669"/>
    <property type="project" value="UniProtKB-SubCell"/>
</dbReference>
<dbReference type="GO" id="GO:0017080">
    <property type="term" value="F:sodium channel regulator activity"/>
    <property type="evidence" value="ECO:0007669"/>
    <property type="project" value="UniProtKB-KW"/>
</dbReference>
<dbReference type="GO" id="GO:0090729">
    <property type="term" value="F:toxin activity"/>
    <property type="evidence" value="ECO:0007669"/>
    <property type="project" value="UniProtKB-KW"/>
</dbReference>